<accession>A4FV52</accession>
<name>VGLU1_BOVIN</name>
<organism>
    <name type="scientific">Bos taurus</name>
    <name type="common">Bovine</name>
    <dbReference type="NCBI Taxonomy" id="9913"/>
    <lineage>
        <taxon>Eukaryota</taxon>
        <taxon>Metazoa</taxon>
        <taxon>Chordata</taxon>
        <taxon>Craniata</taxon>
        <taxon>Vertebrata</taxon>
        <taxon>Euteleostomi</taxon>
        <taxon>Mammalia</taxon>
        <taxon>Eutheria</taxon>
        <taxon>Laurasiatheria</taxon>
        <taxon>Artiodactyla</taxon>
        <taxon>Ruminantia</taxon>
        <taxon>Pecora</taxon>
        <taxon>Bovidae</taxon>
        <taxon>Bovinae</taxon>
        <taxon>Bos</taxon>
    </lineage>
</organism>
<comment type="function">
    <text evidence="1 2">Multifunctional transporter that transports L-glutamate as well as multiple ions such as chloride, proton, potassium, sodium and phosphate. At the synaptic vesicle membrane, mainly functions as an uniporter which transports preferentially L-glutamate but also phosphate from the cytoplasm into synaptic vesicles at presynaptic nerve terminals of excitatory neural cells. The L-glutamate or phosphate uniporter activity is electrogenic and is driven by the proton electrochemical gradient, mainly by the electrical gradient established by the vacuolar H(+)-ATPase across the synaptic vesicle membrane. In addition, functions as a chloride channel that allows a chloride permeation through the synaptic vesicle membrane that affects the proton electrochemical gradient and promotes synaptic vesicles acidification. Moreover, may function as a K(+)/H(+) antiport allowing to maintain the electrical gradient and to decrease chemical gradient and therefore sustain vesicular glutamate uptake. The vesicular K(+)/H(+) antiport activity is electroneutral. At the plasma membrane, following exocytosis, functions as a symporter of Na(+) and phosphate from the extracellular space to the cytoplasm allowing synaptic phosphate homeostasis regulation. The symporter activity is driven by an inside negative membrane potential and is electrogenic (By similarity). Is necessary for synaptic signaling of visual-evoked responses from photoreceptors (By similarity).</text>
</comment>
<comment type="catalytic activity">
    <reaction evidence="2">
        <text>L-glutamate(out) = L-glutamate(in)</text>
        <dbReference type="Rhea" id="RHEA:66336"/>
        <dbReference type="ChEBI" id="CHEBI:29985"/>
    </reaction>
</comment>
<comment type="catalytic activity">
    <reaction evidence="2">
        <text>chloride(in) = chloride(out)</text>
        <dbReference type="Rhea" id="RHEA:29823"/>
        <dbReference type="ChEBI" id="CHEBI:17996"/>
    </reaction>
</comment>
<comment type="catalytic activity">
    <reaction evidence="2">
        <text>3 Na(+)(out) + phosphate(out) = 3 Na(+)(in) + phosphate(in)</text>
        <dbReference type="Rhea" id="RHEA:71255"/>
        <dbReference type="ChEBI" id="CHEBI:29101"/>
        <dbReference type="ChEBI" id="CHEBI:43474"/>
    </reaction>
</comment>
<comment type="catalytic activity">
    <reaction evidence="2">
        <text>phosphate(in) = phosphate(out)</text>
        <dbReference type="Rhea" id="RHEA:32823"/>
        <dbReference type="ChEBI" id="CHEBI:43474"/>
    </reaction>
</comment>
<comment type="catalytic activity">
    <reaction evidence="2">
        <text>K(+)(in) + H(+)(out) = K(+)(out) + H(+)(in)</text>
        <dbReference type="Rhea" id="RHEA:29467"/>
        <dbReference type="ChEBI" id="CHEBI:15378"/>
        <dbReference type="ChEBI" id="CHEBI:29103"/>
    </reaction>
</comment>
<comment type="activity regulation">
    <text evidence="2">Chloride channel activity is allosterically activated by lumenal H(+) and Cl(-) leading to synaptic vesicles acidification. The L-glutamate transport activity is allosterically activated by lumenal H(+) and Cl(-). The allosteric activation by H(+) efficiently prevents non-vesicular efflux across the plasma membrane, thereby restricting L-glutamate transport activity to acidic membranes such as synaptic vesicles.</text>
</comment>
<comment type="subunit">
    <text evidence="1">Interacts with SHANK3.</text>
</comment>
<comment type="subcellular location">
    <subcellularLocation>
        <location evidence="2">Cytoplasmic vesicle</location>
        <location evidence="2">Secretory vesicle</location>
        <location evidence="2">Synaptic vesicle membrane</location>
    </subcellularLocation>
    <subcellularLocation>
        <location evidence="2">Cell membrane</location>
        <topology evidence="2">Multi-pass membrane protein</topology>
    </subcellularLocation>
    <subcellularLocation>
        <location evidence="2">Synapse</location>
        <location evidence="2">Synaptosome</location>
    </subcellularLocation>
</comment>
<comment type="similarity">
    <text evidence="5">Belongs to the major facilitator superfamily. Sodium/anion cotransporter family. VGLUT subfamily.</text>
</comment>
<comment type="caution">
    <text evidence="1 2">Martineau M. et al. show that may function as a L-glutamate/H(+) antiporter (By similarity). However, according to Eriksen J. et al., H(+) is an allosteric activator (By similarity).</text>
</comment>
<protein>
    <recommendedName>
        <fullName evidence="1">Vesicular glutamate transporter 1</fullName>
        <shortName evidence="1">VGluT1</shortName>
    </recommendedName>
    <alternativeName>
        <fullName>Solute carrier family 17 member 7</fullName>
    </alternativeName>
</protein>
<gene>
    <name evidence="1" type="primary">SLC17A7</name>
    <name type="synonym">VGLUT1</name>
</gene>
<keyword id="KW-0050">Antiport</keyword>
<keyword id="KW-1003">Cell membrane</keyword>
<keyword id="KW-0868">Chloride</keyword>
<keyword id="KW-0869">Chloride channel</keyword>
<keyword id="KW-0968">Cytoplasmic vesicle</keyword>
<keyword id="KW-0407">Ion channel</keyword>
<keyword id="KW-0406">Ion transport</keyword>
<keyword id="KW-0472">Membrane</keyword>
<keyword id="KW-0532">Neurotransmitter transport</keyword>
<keyword id="KW-0592">Phosphate transport</keyword>
<keyword id="KW-0597">Phosphoprotein</keyword>
<keyword id="KW-1185">Reference proteome</keyword>
<keyword id="KW-0915">Sodium</keyword>
<keyword id="KW-0739">Sodium transport</keyword>
<keyword id="KW-0769">Symport</keyword>
<keyword id="KW-0770">Synapse</keyword>
<keyword id="KW-0771">Synaptosome</keyword>
<keyword id="KW-0812">Transmembrane</keyword>
<keyword id="KW-1133">Transmembrane helix</keyword>
<keyword id="KW-0813">Transport</keyword>
<evidence type="ECO:0000250" key="1">
    <source>
        <dbReference type="UniProtKB" id="Q3TXX4"/>
    </source>
</evidence>
<evidence type="ECO:0000250" key="2">
    <source>
        <dbReference type="UniProtKB" id="Q62634"/>
    </source>
</evidence>
<evidence type="ECO:0000255" key="3"/>
<evidence type="ECO:0000256" key="4">
    <source>
        <dbReference type="SAM" id="MobiDB-lite"/>
    </source>
</evidence>
<evidence type="ECO:0000305" key="5"/>
<sequence length="560" mass="61651">MEFRQEEFRKLAGRALGKLHRLLEKRQEGAETLELSADGRPVTTQTRDPPVVDCTCFGLPRRYIIAIMSGLGFCISFGIRCNLGVAIVSMVNNSTTHRGGHVVMQKAQFNWDPETVGLIHGSFFWGYIVTQIPGGFICQKFAANRVFGFAIVATSTLNMLIPSAARVHYGCVIFVRILQGLVEGVTYPACHGIWSKWAPPLERSRLATTAFCGSYAGAVVAMPLAGVLVQYSGWSSVFYVYGSFGIFWYLFWLLVSYESPALHPSISEEERKYIEDAIGESAKLMNPVTKFNTPWRRFFTSMPVYAIIVANFCRSWTFYLLLISQPAYFEEVFGFEISKVGLVSALPHLVMTIIVPIGGQIADFLRSRRIMSTTNVRKLMNCGGFGMEATLLLVVGYSHSKGVAISFLVLAVGFSGFAISGFNVNHLDIAPRYASILMGISNGVGTLSGMVCPIIVGAMTKHKTREEWQYVFLIASLVHYGGVIFYGVFASGEKQPWAEPEEMSEEKCGFVGHDQLAGSDESEMEDEAEPPGAPPAPPPSYGATHSTVQPPRPPPPVRDY</sequence>
<feature type="chain" id="PRO_0000331610" description="Vesicular glutamate transporter 1">
    <location>
        <begin position="1"/>
        <end position="560"/>
    </location>
</feature>
<feature type="topological domain" description="Cytoplasmic" evidence="3">
    <location>
        <begin position="1"/>
        <end position="63"/>
    </location>
</feature>
<feature type="transmembrane region" description="Helical" evidence="3">
    <location>
        <begin position="64"/>
        <end position="84"/>
    </location>
</feature>
<feature type="topological domain" description="Extracellular" evidence="3">
    <location>
        <begin position="85"/>
        <end position="116"/>
    </location>
</feature>
<feature type="transmembrane region" description="Helical" evidence="3">
    <location>
        <begin position="117"/>
        <end position="137"/>
    </location>
</feature>
<feature type="topological domain" description="Cytoplasmic" evidence="3">
    <location>
        <begin position="138"/>
        <end position="140"/>
    </location>
</feature>
<feature type="transmembrane region" description="Helical" evidence="3">
    <location>
        <begin position="141"/>
        <end position="161"/>
    </location>
</feature>
<feature type="topological domain" description="Extracellular" evidence="3">
    <location>
        <begin position="162"/>
        <end position="169"/>
    </location>
</feature>
<feature type="transmembrane region" description="Helical" evidence="3">
    <location>
        <begin position="170"/>
        <end position="190"/>
    </location>
</feature>
<feature type="topological domain" description="Cytoplasmic" evidence="3">
    <location>
        <begin position="191"/>
        <end position="208"/>
    </location>
</feature>
<feature type="transmembrane region" description="Helical" evidence="3">
    <location>
        <begin position="209"/>
        <end position="229"/>
    </location>
</feature>
<feature type="topological domain" description="Extracellular" evidence="3">
    <location>
        <begin position="230"/>
        <end position="236"/>
    </location>
</feature>
<feature type="transmembrane region" description="Helical" evidence="3">
    <location>
        <begin position="237"/>
        <end position="257"/>
    </location>
</feature>
<feature type="topological domain" description="Cytoplasmic" evidence="3">
    <location>
        <begin position="258"/>
        <end position="302"/>
    </location>
</feature>
<feature type="transmembrane region" description="Helical" evidence="3">
    <location>
        <begin position="303"/>
        <end position="323"/>
    </location>
</feature>
<feature type="topological domain" description="Extracellular" evidence="3">
    <location>
        <begin position="324"/>
        <end position="341"/>
    </location>
</feature>
<feature type="transmembrane region" description="Helical" evidence="3">
    <location>
        <begin position="342"/>
        <end position="362"/>
    </location>
</feature>
<feature type="topological domain" description="Cytoplasmic" evidence="3">
    <location>
        <begin position="363"/>
        <end position="378"/>
    </location>
</feature>
<feature type="transmembrane region" description="Helical" evidence="3">
    <location>
        <begin position="379"/>
        <end position="399"/>
    </location>
</feature>
<feature type="topological domain" description="Extracellular" evidence="3">
    <location>
        <begin position="400"/>
        <end position="401"/>
    </location>
</feature>
<feature type="transmembrane region" description="Helical" evidence="3">
    <location>
        <begin position="402"/>
        <end position="422"/>
    </location>
</feature>
<feature type="topological domain" description="Cytoplasmic" evidence="3">
    <location>
        <begin position="423"/>
        <end position="435"/>
    </location>
</feature>
<feature type="transmembrane region" description="Helical" evidence="3">
    <location>
        <begin position="436"/>
        <end position="456"/>
    </location>
</feature>
<feature type="topological domain" description="Extracellular" evidence="3">
    <location>
        <begin position="457"/>
        <end position="469"/>
    </location>
</feature>
<feature type="transmembrane region" description="Helical" evidence="3">
    <location>
        <begin position="470"/>
        <end position="490"/>
    </location>
</feature>
<feature type="topological domain" description="Cytoplasmic" evidence="3">
    <location>
        <begin position="491"/>
        <end position="560"/>
    </location>
</feature>
<feature type="region of interest" description="Disordered" evidence="4">
    <location>
        <begin position="497"/>
        <end position="560"/>
    </location>
</feature>
<feature type="compositionally biased region" description="Acidic residues" evidence="4">
    <location>
        <begin position="520"/>
        <end position="529"/>
    </location>
</feature>
<feature type="compositionally biased region" description="Pro residues" evidence="4">
    <location>
        <begin position="531"/>
        <end position="540"/>
    </location>
</feature>
<feature type="compositionally biased region" description="Pro residues" evidence="4">
    <location>
        <begin position="550"/>
        <end position="560"/>
    </location>
</feature>
<feature type="modified residue" description="Phosphoserine" evidence="2">
    <location>
        <position position="504"/>
    </location>
</feature>
<dbReference type="EMBL" id="BC123750">
    <property type="protein sequence ID" value="AAI23751.1"/>
    <property type="molecule type" value="mRNA"/>
</dbReference>
<dbReference type="RefSeq" id="NP_001091515.1">
    <property type="nucleotide sequence ID" value="NM_001098046.1"/>
</dbReference>
<dbReference type="SMR" id="A4FV52"/>
<dbReference type="FunCoup" id="A4FV52">
    <property type="interactions" value="741"/>
</dbReference>
<dbReference type="STRING" id="9913.ENSBTAP00000009255"/>
<dbReference type="PaxDb" id="9913-ENSBTAP00000009255"/>
<dbReference type="Ensembl" id="ENSBTAT00000009255.7">
    <property type="protein sequence ID" value="ENSBTAP00000009255.5"/>
    <property type="gene ID" value="ENSBTAG00000007036.7"/>
</dbReference>
<dbReference type="GeneID" id="518849"/>
<dbReference type="KEGG" id="bta:518849"/>
<dbReference type="CTD" id="57030"/>
<dbReference type="VEuPathDB" id="HostDB:ENSBTAG00000007036"/>
<dbReference type="VGNC" id="VGNC:34702">
    <property type="gene designation" value="SLC17A7"/>
</dbReference>
<dbReference type="eggNOG" id="KOG2532">
    <property type="taxonomic scope" value="Eukaryota"/>
</dbReference>
<dbReference type="GeneTree" id="ENSGT00940000159110"/>
<dbReference type="HOGENOM" id="CLU_001265_5_0_1"/>
<dbReference type="InParanoid" id="A4FV52"/>
<dbReference type="OMA" id="RRTTWGM"/>
<dbReference type="OrthoDB" id="2985014at2759"/>
<dbReference type="TreeFam" id="TF313535"/>
<dbReference type="Reactome" id="R-BTA-210500">
    <property type="pathway name" value="Glutamate Neurotransmitter Release Cycle"/>
</dbReference>
<dbReference type="Reactome" id="R-BTA-428643">
    <property type="pathway name" value="Organic anion transporters"/>
</dbReference>
<dbReference type="Proteomes" id="UP000009136">
    <property type="component" value="Chromosome 18"/>
</dbReference>
<dbReference type="Bgee" id="ENSBTAG00000007036">
    <property type="expression patterns" value="Expressed in retina and 58 other cell types or tissues"/>
</dbReference>
<dbReference type="GO" id="GO:0044300">
    <property type="term" value="C:cerebellar mossy fiber"/>
    <property type="evidence" value="ECO:0007669"/>
    <property type="project" value="Ensembl"/>
</dbReference>
<dbReference type="GO" id="GO:0034707">
    <property type="term" value="C:chloride channel complex"/>
    <property type="evidence" value="ECO:0007669"/>
    <property type="project" value="UniProtKB-KW"/>
</dbReference>
<dbReference type="GO" id="GO:0060076">
    <property type="term" value="C:excitatory synapse"/>
    <property type="evidence" value="ECO:0000318"/>
    <property type="project" value="GO_Central"/>
</dbReference>
<dbReference type="GO" id="GO:0005886">
    <property type="term" value="C:plasma membrane"/>
    <property type="evidence" value="ECO:0007669"/>
    <property type="project" value="UniProtKB-SubCell"/>
</dbReference>
<dbReference type="GO" id="GO:0098794">
    <property type="term" value="C:postsynapse"/>
    <property type="evidence" value="ECO:0007669"/>
    <property type="project" value="GOC"/>
</dbReference>
<dbReference type="GO" id="GO:0048786">
    <property type="term" value="C:presynaptic active zone"/>
    <property type="evidence" value="ECO:0007669"/>
    <property type="project" value="Ensembl"/>
</dbReference>
<dbReference type="GO" id="GO:0030672">
    <property type="term" value="C:synaptic vesicle membrane"/>
    <property type="evidence" value="ECO:0000250"/>
    <property type="project" value="UniProtKB"/>
</dbReference>
<dbReference type="GO" id="GO:0005254">
    <property type="term" value="F:chloride channel activity"/>
    <property type="evidence" value="ECO:0000250"/>
    <property type="project" value="UniProtKB"/>
</dbReference>
<dbReference type="GO" id="GO:0008068">
    <property type="term" value="F:extracellularly glutamate-gated chloride channel activity"/>
    <property type="evidence" value="ECO:0007669"/>
    <property type="project" value="Ensembl"/>
</dbReference>
<dbReference type="GO" id="GO:0005313">
    <property type="term" value="F:L-glutamate transmembrane transporter activity"/>
    <property type="evidence" value="ECO:0000318"/>
    <property type="project" value="GO_Central"/>
</dbReference>
<dbReference type="GO" id="GO:0140788">
    <property type="term" value="F:L-glutamate uniporter activity"/>
    <property type="evidence" value="ECO:0000250"/>
    <property type="project" value="UniProtKB"/>
</dbReference>
<dbReference type="GO" id="GO:0005326">
    <property type="term" value="F:neurotransmitter transmembrane transporter activity"/>
    <property type="evidence" value="ECO:0000318"/>
    <property type="project" value="GO_Central"/>
</dbReference>
<dbReference type="GO" id="GO:0140787">
    <property type="term" value="F:phosphate ion uniporter activity"/>
    <property type="evidence" value="ECO:0000250"/>
    <property type="project" value="UniProtKB"/>
</dbReference>
<dbReference type="GO" id="GO:0015386">
    <property type="term" value="F:potassium:proton antiporter activity"/>
    <property type="evidence" value="ECO:0000250"/>
    <property type="project" value="UniProtKB"/>
</dbReference>
<dbReference type="GO" id="GO:0005436">
    <property type="term" value="F:sodium:phosphate symporter activity"/>
    <property type="evidence" value="ECO:0000250"/>
    <property type="project" value="UniProtKB"/>
</dbReference>
<dbReference type="GO" id="GO:0006821">
    <property type="term" value="P:chloride transport"/>
    <property type="evidence" value="ECO:0000250"/>
    <property type="project" value="UniProtKB"/>
</dbReference>
<dbReference type="GO" id="GO:0015813">
    <property type="term" value="P:L-glutamate transmembrane transport"/>
    <property type="evidence" value="ECO:0000250"/>
    <property type="project" value="UniProtKB"/>
</dbReference>
<dbReference type="GO" id="GO:0007616">
    <property type="term" value="P:long-term memory"/>
    <property type="evidence" value="ECO:0007669"/>
    <property type="project" value="Ensembl"/>
</dbReference>
<dbReference type="GO" id="GO:0098700">
    <property type="term" value="P:neurotransmitter loading into synaptic vesicle"/>
    <property type="evidence" value="ECO:0000318"/>
    <property type="project" value="GO_Central"/>
</dbReference>
<dbReference type="GO" id="GO:0055062">
    <property type="term" value="P:phosphate ion homeostasis"/>
    <property type="evidence" value="ECO:0007669"/>
    <property type="project" value="Ensembl"/>
</dbReference>
<dbReference type="GO" id="GO:0035435">
    <property type="term" value="P:phosphate ion transmembrane transport"/>
    <property type="evidence" value="ECO:0007669"/>
    <property type="project" value="Ensembl"/>
</dbReference>
<dbReference type="GO" id="GO:0006817">
    <property type="term" value="P:phosphate ion transport"/>
    <property type="evidence" value="ECO:0000250"/>
    <property type="project" value="UniProtKB"/>
</dbReference>
<dbReference type="GO" id="GO:0006813">
    <property type="term" value="P:potassium ion transport"/>
    <property type="evidence" value="ECO:0000250"/>
    <property type="project" value="UniProtKB"/>
</dbReference>
<dbReference type="GO" id="GO:0050803">
    <property type="term" value="P:regulation of synapse structure or activity"/>
    <property type="evidence" value="ECO:0000318"/>
    <property type="project" value="GO_Central"/>
</dbReference>
<dbReference type="GO" id="GO:0044341">
    <property type="term" value="P:sodium-dependent phosphate transport"/>
    <property type="evidence" value="ECO:0000250"/>
    <property type="project" value="UniProtKB"/>
</dbReference>
<dbReference type="GO" id="GO:0035249">
    <property type="term" value="P:synaptic transmission, glutamatergic"/>
    <property type="evidence" value="ECO:0000318"/>
    <property type="project" value="GO_Central"/>
</dbReference>
<dbReference type="GO" id="GO:0097401">
    <property type="term" value="P:synaptic vesicle lumen acidification"/>
    <property type="evidence" value="ECO:0007669"/>
    <property type="project" value="Ensembl"/>
</dbReference>
<dbReference type="CDD" id="cd17382">
    <property type="entry name" value="MFS_SLC17A6_7_8_VGluT"/>
    <property type="match status" value="1"/>
</dbReference>
<dbReference type="FunFam" id="1.20.1250.20:FF:000004">
    <property type="entry name" value="vesicular glutamate transporter 2 isoform X1"/>
    <property type="match status" value="1"/>
</dbReference>
<dbReference type="FunFam" id="1.20.1250.20:FF:000005">
    <property type="entry name" value="vesicular glutamate transporter 2 isoform X1"/>
    <property type="match status" value="1"/>
</dbReference>
<dbReference type="Gene3D" id="1.20.1250.20">
    <property type="entry name" value="MFS general substrate transporter like domains"/>
    <property type="match status" value="2"/>
</dbReference>
<dbReference type="InterPro" id="IPR011701">
    <property type="entry name" value="MFS"/>
</dbReference>
<dbReference type="InterPro" id="IPR020846">
    <property type="entry name" value="MFS_dom"/>
</dbReference>
<dbReference type="InterPro" id="IPR050382">
    <property type="entry name" value="MFS_Na/Anion_cotransporter"/>
</dbReference>
<dbReference type="InterPro" id="IPR036259">
    <property type="entry name" value="MFS_trans_sf"/>
</dbReference>
<dbReference type="PANTHER" id="PTHR11662">
    <property type="entry name" value="SOLUTE CARRIER FAMILY 17"/>
    <property type="match status" value="1"/>
</dbReference>
<dbReference type="PANTHER" id="PTHR11662:SF29">
    <property type="entry name" value="VESICULAR GLUTAMATE TRANSPORTER 1"/>
    <property type="match status" value="1"/>
</dbReference>
<dbReference type="Pfam" id="PF07690">
    <property type="entry name" value="MFS_1"/>
    <property type="match status" value="1"/>
</dbReference>
<dbReference type="SUPFAM" id="SSF103473">
    <property type="entry name" value="MFS general substrate transporter"/>
    <property type="match status" value="1"/>
</dbReference>
<dbReference type="PROSITE" id="PS50850">
    <property type="entry name" value="MFS"/>
    <property type="match status" value="1"/>
</dbReference>
<proteinExistence type="evidence at transcript level"/>
<reference key="1">
    <citation type="submission" date="2006-09" db="EMBL/GenBank/DDBJ databases">
        <authorList>
            <consortium name="NIH - Mammalian Gene Collection (MGC) project"/>
        </authorList>
    </citation>
    <scope>NUCLEOTIDE SEQUENCE [LARGE SCALE MRNA]</scope>
    <source>
        <strain>Hereford</strain>
        <tissue>Brain cortex</tissue>
    </source>
</reference>